<organism>
    <name type="scientific">Lactobacillus delbrueckii subsp. bulgaricus (strain ATCC BAA-365 / Lb-18)</name>
    <dbReference type="NCBI Taxonomy" id="321956"/>
    <lineage>
        <taxon>Bacteria</taxon>
        <taxon>Bacillati</taxon>
        <taxon>Bacillota</taxon>
        <taxon>Bacilli</taxon>
        <taxon>Lactobacillales</taxon>
        <taxon>Lactobacillaceae</taxon>
        <taxon>Lactobacillus</taxon>
    </lineage>
</organism>
<keyword id="KW-0012">Acyltransferase</keyword>
<keyword id="KW-0963">Cytoplasm</keyword>
<keyword id="KW-0275">Fatty acid biosynthesis</keyword>
<keyword id="KW-0276">Fatty acid metabolism</keyword>
<keyword id="KW-0444">Lipid biosynthesis</keyword>
<keyword id="KW-0443">Lipid metabolism</keyword>
<keyword id="KW-0511">Multifunctional enzyme</keyword>
<keyword id="KW-0808">Transferase</keyword>
<feature type="chain" id="PRO_1000187873" description="Beta-ketoacyl-[acyl-carrier-protein] synthase III">
    <location>
        <begin position="1"/>
        <end position="319"/>
    </location>
</feature>
<feature type="region of interest" description="ACP-binding" evidence="1">
    <location>
        <begin position="247"/>
        <end position="251"/>
    </location>
</feature>
<feature type="active site" evidence="1">
    <location>
        <position position="110"/>
    </location>
</feature>
<feature type="active site" evidence="1">
    <location>
        <position position="246"/>
    </location>
</feature>
<feature type="active site" evidence="1">
    <location>
        <position position="276"/>
    </location>
</feature>
<evidence type="ECO:0000255" key="1">
    <source>
        <dbReference type="HAMAP-Rule" id="MF_01815"/>
    </source>
</evidence>
<gene>
    <name evidence="1" type="primary">fabH</name>
    <name type="ordered locus">LBUL_0818</name>
</gene>
<accession>Q04AU8</accession>
<sequence length="319" mass="33939">MTYARIAKSSRYLPEFAVSNDDLSQIMETSDEWIKTRTGISSRRISQQENTSDLAIQVAKQLLAGEDPAGVDLIIVATMSPDAYTPATAALVQAAVGAENAACFDLSAACSGFVYALDVAEKMLRRPGGMALVIGAETLSKLVDWQDRTTAVLFGDGAGGVLVKNDALEPHFLASQLKSYGHLAKFLSAGQTSPQPFPGPVTDLAPFKMNGREVYKFATHKVPEVITACLEEAGVGLAEVDLFLFHQANYRIVKQVARRLDLPEEKFPCNIAEYGNTSAASEAILLAELAEEGKAQAGDLVVLAGFGGGLTAAAQLVRL</sequence>
<reference key="1">
    <citation type="journal article" date="2006" name="Proc. Natl. Acad. Sci. U.S.A.">
        <title>Comparative genomics of the lactic acid bacteria.</title>
        <authorList>
            <person name="Makarova K.S."/>
            <person name="Slesarev A."/>
            <person name="Wolf Y.I."/>
            <person name="Sorokin A."/>
            <person name="Mirkin B."/>
            <person name="Koonin E.V."/>
            <person name="Pavlov A."/>
            <person name="Pavlova N."/>
            <person name="Karamychev V."/>
            <person name="Polouchine N."/>
            <person name="Shakhova V."/>
            <person name="Grigoriev I."/>
            <person name="Lou Y."/>
            <person name="Rohksar D."/>
            <person name="Lucas S."/>
            <person name="Huang K."/>
            <person name="Goodstein D.M."/>
            <person name="Hawkins T."/>
            <person name="Plengvidhya V."/>
            <person name="Welker D."/>
            <person name="Hughes J."/>
            <person name="Goh Y."/>
            <person name="Benson A."/>
            <person name="Baldwin K."/>
            <person name="Lee J.-H."/>
            <person name="Diaz-Muniz I."/>
            <person name="Dosti B."/>
            <person name="Smeianov V."/>
            <person name="Wechter W."/>
            <person name="Barabote R."/>
            <person name="Lorca G."/>
            <person name="Altermann E."/>
            <person name="Barrangou R."/>
            <person name="Ganesan B."/>
            <person name="Xie Y."/>
            <person name="Rawsthorne H."/>
            <person name="Tamir D."/>
            <person name="Parker C."/>
            <person name="Breidt F."/>
            <person name="Broadbent J.R."/>
            <person name="Hutkins R."/>
            <person name="O'Sullivan D."/>
            <person name="Steele J."/>
            <person name="Unlu G."/>
            <person name="Saier M.H. Jr."/>
            <person name="Klaenhammer T."/>
            <person name="Richardson P."/>
            <person name="Kozyavkin S."/>
            <person name="Weimer B.C."/>
            <person name="Mills D.A."/>
        </authorList>
    </citation>
    <scope>NUCLEOTIDE SEQUENCE [LARGE SCALE GENOMIC DNA]</scope>
    <source>
        <strain>ATCC BAA-365 / Lb-18</strain>
    </source>
</reference>
<dbReference type="EC" id="2.3.1.180" evidence="1"/>
<dbReference type="EMBL" id="CP000412">
    <property type="protein sequence ID" value="ABJ58424.1"/>
    <property type="molecule type" value="Genomic_DNA"/>
</dbReference>
<dbReference type="RefSeq" id="WP_011678192.1">
    <property type="nucleotide sequence ID" value="NC_008529.1"/>
</dbReference>
<dbReference type="SMR" id="Q04AU8"/>
<dbReference type="KEGG" id="lbu:LBUL_0818"/>
<dbReference type="HOGENOM" id="CLU_039592_4_1_9"/>
<dbReference type="BioCyc" id="LDEL321956:LBUL_RS03890-MONOMER"/>
<dbReference type="UniPathway" id="UPA00094"/>
<dbReference type="GO" id="GO:0005737">
    <property type="term" value="C:cytoplasm"/>
    <property type="evidence" value="ECO:0007669"/>
    <property type="project" value="UniProtKB-SubCell"/>
</dbReference>
<dbReference type="GO" id="GO:0004315">
    <property type="term" value="F:3-oxoacyl-[acyl-carrier-protein] synthase activity"/>
    <property type="evidence" value="ECO:0007669"/>
    <property type="project" value="InterPro"/>
</dbReference>
<dbReference type="GO" id="GO:0033818">
    <property type="term" value="F:beta-ketoacyl-acyl-carrier-protein synthase III activity"/>
    <property type="evidence" value="ECO:0007669"/>
    <property type="project" value="UniProtKB-UniRule"/>
</dbReference>
<dbReference type="GO" id="GO:0006633">
    <property type="term" value="P:fatty acid biosynthetic process"/>
    <property type="evidence" value="ECO:0007669"/>
    <property type="project" value="UniProtKB-UniRule"/>
</dbReference>
<dbReference type="CDD" id="cd00830">
    <property type="entry name" value="KAS_III"/>
    <property type="match status" value="1"/>
</dbReference>
<dbReference type="Gene3D" id="3.40.47.10">
    <property type="match status" value="1"/>
</dbReference>
<dbReference type="HAMAP" id="MF_01815">
    <property type="entry name" value="FabH"/>
    <property type="match status" value="1"/>
</dbReference>
<dbReference type="InterPro" id="IPR013747">
    <property type="entry name" value="ACP_syn_III_C"/>
</dbReference>
<dbReference type="InterPro" id="IPR013751">
    <property type="entry name" value="ACP_syn_III_N"/>
</dbReference>
<dbReference type="InterPro" id="IPR004655">
    <property type="entry name" value="FabH"/>
</dbReference>
<dbReference type="InterPro" id="IPR016039">
    <property type="entry name" value="Thiolase-like"/>
</dbReference>
<dbReference type="NCBIfam" id="TIGR00747">
    <property type="entry name" value="fabH"/>
    <property type="match status" value="1"/>
</dbReference>
<dbReference type="NCBIfam" id="NF006829">
    <property type="entry name" value="PRK09352.1"/>
    <property type="match status" value="1"/>
</dbReference>
<dbReference type="PANTHER" id="PTHR43091">
    <property type="entry name" value="3-OXOACYL-[ACYL-CARRIER-PROTEIN] SYNTHASE"/>
    <property type="match status" value="1"/>
</dbReference>
<dbReference type="PANTHER" id="PTHR43091:SF1">
    <property type="entry name" value="BETA-KETOACYL-[ACYL-CARRIER-PROTEIN] SYNTHASE III, CHLOROPLASTIC"/>
    <property type="match status" value="1"/>
</dbReference>
<dbReference type="Pfam" id="PF08545">
    <property type="entry name" value="ACP_syn_III"/>
    <property type="match status" value="1"/>
</dbReference>
<dbReference type="Pfam" id="PF08541">
    <property type="entry name" value="ACP_syn_III_C"/>
    <property type="match status" value="1"/>
</dbReference>
<dbReference type="SUPFAM" id="SSF53901">
    <property type="entry name" value="Thiolase-like"/>
    <property type="match status" value="1"/>
</dbReference>
<name>FABH_LACDB</name>
<protein>
    <recommendedName>
        <fullName evidence="1">Beta-ketoacyl-[acyl-carrier-protein] synthase III</fullName>
        <shortName evidence="1">Beta-ketoacyl-ACP synthase III</shortName>
        <shortName evidence="1">KAS III</shortName>
        <ecNumber evidence="1">2.3.1.180</ecNumber>
    </recommendedName>
    <alternativeName>
        <fullName evidence="1">3-oxoacyl-[acyl-carrier-protein] synthase 3</fullName>
    </alternativeName>
    <alternativeName>
        <fullName evidence="1">3-oxoacyl-[acyl-carrier-protein] synthase III</fullName>
    </alternativeName>
</protein>
<comment type="function">
    <text evidence="1">Catalyzes the condensation reaction of fatty acid synthesis by the addition to an acyl acceptor of two carbons from malonyl-ACP. Catalyzes the first condensation reaction which initiates fatty acid synthesis and may therefore play a role in governing the total rate of fatty acid production. Possesses both acetoacetyl-ACP synthase and acetyl transacylase activities. Its substrate specificity determines the biosynthesis of branched-chain and/or straight-chain of fatty acids.</text>
</comment>
<comment type="catalytic activity">
    <reaction evidence="1">
        <text>malonyl-[ACP] + acetyl-CoA + H(+) = 3-oxobutanoyl-[ACP] + CO2 + CoA</text>
        <dbReference type="Rhea" id="RHEA:12080"/>
        <dbReference type="Rhea" id="RHEA-COMP:9623"/>
        <dbReference type="Rhea" id="RHEA-COMP:9625"/>
        <dbReference type="ChEBI" id="CHEBI:15378"/>
        <dbReference type="ChEBI" id="CHEBI:16526"/>
        <dbReference type="ChEBI" id="CHEBI:57287"/>
        <dbReference type="ChEBI" id="CHEBI:57288"/>
        <dbReference type="ChEBI" id="CHEBI:78449"/>
        <dbReference type="ChEBI" id="CHEBI:78450"/>
        <dbReference type="EC" id="2.3.1.180"/>
    </reaction>
</comment>
<comment type="pathway">
    <text evidence="1">Lipid metabolism; fatty acid biosynthesis.</text>
</comment>
<comment type="subunit">
    <text evidence="1">Homodimer.</text>
</comment>
<comment type="subcellular location">
    <subcellularLocation>
        <location evidence="1">Cytoplasm</location>
    </subcellularLocation>
</comment>
<comment type="domain">
    <text evidence="1">The last Arg residue of the ACP-binding site is essential for the weak association between ACP/AcpP and FabH.</text>
</comment>
<comment type="similarity">
    <text evidence="1">Belongs to the thiolase-like superfamily. FabH family.</text>
</comment>
<proteinExistence type="inferred from homology"/>